<accession>Q0S766</accession>
<name>PURL_RHOJR</name>
<feature type="chain" id="PRO_1000050346" description="Phosphoribosylformylglycinamidine synthase subunit PurL">
    <location>
        <begin position="1"/>
        <end position="761"/>
    </location>
</feature>
<feature type="active site" evidence="1">
    <location>
        <position position="58"/>
    </location>
</feature>
<feature type="active site" description="Proton acceptor" evidence="1">
    <location>
        <position position="109"/>
    </location>
</feature>
<feature type="binding site" evidence="1">
    <location>
        <position position="61"/>
    </location>
    <ligand>
        <name>ATP</name>
        <dbReference type="ChEBI" id="CHEBI:30616"/>
    </ligand>
</feature>
<feature type="binding site" evidence="1">
    <location>
        <position position="105"/>
    </location>
    <ligand>
        <name>ATP</name>
        <dbReference type="ChEBI" id="CHEBI:30616"/>
    </ligand>
</feature>
<feature type="binding site" evidence="1">
    <location>
        <position position="107"/>
    </location>
    <ligand>
        <name>Mg(2+)</name>
        <dbReference type="ChEBI" id="CHEBI:18420"/>
        <label>1</label>
    </ligand>
</feature>
<feature type="binding site" evidence="1">
    <location>
        <begin position="108"/>
        <end position="111"/>
    </location>
    <ligand>
        <name>substrate</name>
    </ligand>
</feature>
<feature type="binding site" evidence="1">
    <location>
        <position position="130"/>
    </location>
    <ligand>
        <name>substrate</name>
    </ligand>
</feature>
<feature type="binding site" evidence="1">
    <location>
        <position position="131"/>
    </location>
    <ligand>
        <name>Mg(2+)</name>
        <dbReference type="ChEBI" id="CHEBI:18420"/>
        <label>2</label>
    </ligand>
</feature>
<feature type="binding site" evidence="1">
    <location>
        <position position="259"/>
    </location>
    <ligand>
        <name>substrate</name>
    </ligand>
</feature>
<feature type="binding site" evidence="1">
    <location>
        <position position="287"/>
    </location>
    <ligand>
        <name>Mg(2+)</name>
        <dbReference type="ChEBI" id="CHEBI:18420"/>
        <label>2</label>
    </ligand>
</feature>
<feature type="binding site" evidence="1">
    <location>
        <begin position="331"/>
        <end position="333"/>
    </location>
    <ligand>
        <name>substrate</name>
    </ligand>
</feature>
<feature type="binding site" evidence="1">
    <location>
        <position position="519"/>
    </location>
    <ligand>
        <name>ATP</name>
        <dbReference type="ChEBI" id="CHEBI:30616"/>
    </ligand>
</feature>
<feature type="binding site" evidence="1">
    <location>
        <position position="556"/>
    </location>
    <ligand>
        <name>ATP</name>
        <dbReference type="ChEBI" id="CHEBI:30616"/>
    </ligand>
</feature>
<feature type="binding site" evidence="1">
    <location>
        <position position="557"/>
    </location>
    <ligand>
        <name>Mg(2+)</name>
        <dbReference type="ChEBI" id="CHEBI:18420"/>
        <label>1</label>
    </ligand>
</feature>
<feature type="binding site" evidence="1">
    <location>
        <position position="559"/>
    </location>
    <ligand>
        <name>substrate</name>
    </ligand>
</feature>
<keyword id="KW-0067">ATP-binding</keyword>
<keyword id="KW-0963">Cytoplasm</keyword>
<keyword id="KW-0436">Ligase</keyword>
<keyword id="KW-0460">Magnesium</keyword>
<keyword id="KW-0479">Metal-binding</keyword>
<keyword id="KW-0547">Nucleotide-binding</keyword>
<keyword id="KW-0658">Purine biosynthesis</keyword>
<protein>
    <recommendedName>
        <fullName evidence="1">Phosphoribosylformylglycinamidine synthase subunit PurL</fullName>
        <shortName evidence="1">FGAM synthase</shortName>
        <ecNumber evidence="1">6.3.5.3</ecNumber>
    </recommendedName>
    <alternativeName>
        <fullName evidence="1">Formylglycinamide ribonucleotide amidotransferase subunit II</fullName>
        <shortName evidence="1">FGAR amidotransferase II</shortName>
        <shortName evidence="1">FGAR-AT II</shortName>
    </alternativeName>
    <alternativeName>
        <fullName evidence="1">Glutamine amidotransferase PurL</fullName>
    </alternativeName>
    <alternativeName>
        <fullName evidence="1">Phosphoribosylformylglycinamidine synthase subunit II</fullName>
    </alternativeName>
</protein>
<sequence>MSAHPVDTVTAATATPDVAQPFKELGLKDDEYARIKEILGRRPTEAELAMYSVMWSEHCSYKSSKVHLKYFGETTTDEMRSSMLAGIGENAGVVDIGDGWAVTFKVESHNHPSYVEPYQGAATGVGGIVRDIMAMGARPIAVMDQLRFGAADAPDTRRVVDGVVRGVGGYGNSLGLPNVGGETVFDESYAGNPLVNALCAGAMRVEDLHLAFASGAGNKIILFGARTGLDGIGGVSVLASETFDGDESGTGRKKLPAVQVGDPFTEKVLIECCLELYAAKLVVGIQDLGGAGLSCATSELAAAGDGGMHINLEQVPMRATGMTAAEVLSSESQERMCAVVTPDNVDAFMEVCKKWDVLATVIGEVTDGERLTISWHGETVVDVPPRTVAHEGPVYERPVQRPASQDALVANTTAGLTRPESADELKATLLKMLASPALCSRKWITEQYDRYVRGNTVLAENADSGVIRVDEKTGRGIALATDASGRYTALDPYAGAQLALAEAFRNVAVTGATPKAVSNCLNFGSPEDPGVMWQFQQAVRGLADGCAKLGIPVTGGNVSFYNQTGSTPILPTPVVAVLGVIDDVHRRIPTGLGLEPGETLILLGDTRDEFDGSIWSQVEHGHLGGVPPKVDLEREQLLADILLAASRDGLVSAAHDLSEGGLAQTVVEAALAGETGCRILLPDDADPFVTLFSESSGRVLVAVPRTEETRFTGMCTARNLPWVRIGVVDEGSDSVEVQGQFSVSLAELRTTFEGTLPALFG</sequence>
<gene>
    <name evidence="1" type="primary">purL</name>
    <name type="ordered locus">RHA1_ro04835</name>
</gene>
<evidence type="ECO:0000255" key="1">
    <source>
        <dbReference type="HAMAP-Rule" id="MF_00420"/>
    </source>
</evidence>
<dbReference type="EC" id="6.3.5.3" evidence="1"/>
<dbReference type="EMBL" id="CP000431">
    <property type="protein sequence ID" value="ABG96620.1"/>
    <property type="molecule type" value="Genomic_DNA"/>
</dbReference>
<dbReference type="RefSeq" id="WP_009477899.1">
    <property type="nucleotide sequence ID" value="NC_008268.1"/>
</dbReference>
<dbReference type="SMR" id="Q0S766"/>
<dbReference type="KEGG" id="rha:RHA1_ro04835"/>
<dbReference type="eggNOG" id="COG0046">
    <property type="taxonomic scope" value="Bacteria"/>
</dbReference>
<dbReference type="HOGENOM" id="CLU_003100_0_1_11"/>
<dbReference type="OrthoDB" id="9804441at2"/>
<dbReference type="UniPathway" id="UPA00074">
    <property type="reaction ID" value="UER00128"/>
</dbReference>
<dbReference type="Proteomes" id="UP000008710">
    <property type="component" value="Chromosome"/>
</dbReference>
<dbReference type="GO" id="GO:0005737">
    <property type="term" value="C:cytoplasm"/>
    <property type="evidence" value="ECO:0007669"/>
    <property type="project" value="UniProtKB-SubCell"/>
</dbReference>
<dbReference type="GO" id="GO:0005524">
    <property type="term" value="F:ATP binding"/>
    <property type="evidence" value="ECO:0007669"/>
    <property type="project" value="UniProtKB-UniRule"/>
</dbReference>
<dbReference type="GO" id="GO:0000287">
    <property type="term" value="F:magnesium ion binding"/>
    <property type="evidence" value="ECO:0007669"/>
    <property type="project" value="UniProtKB-UniRule"/>
</dbReference>
<dbReference type="GO" id="GO:0004642">
    <property type="term" value="F:phosphoribosylformylglycinamidine synthase activity"/>
    <property type="evidence" value="ECO:0007669"/>
    <property type="project" value="UniProtKB-UniRule"/>
</dbReference>
<dbReference type="GO" id="GO:0006189">
    <property type="term" value="P:'de novo' IMP biosynthetic process"/>
    <property type="evidence" value="ECO:0007669"/>
    <property type="project" value="UniProtKB-UniRule"/>
</dbReference>
<dbReference type="CDD" id="cd02203">
    <property type="entry name" value="PurL_repeat1"/>
    <property type="match status" value="1"/>
</dbReference>
<dbReference type="CDD" id="cd02204">
    <property type="entry name" value="PurL_repeat2"/>
    <property type="match status" value="1"/>
</dbReference>
<dbReference type="FunFam" id="3.30.1330.10:FF:000004">
    <property type="entry name" value="Phosphoribosylformylglycinamidine synthase subunit PurL"/>
    <property type="match status" value="1"/>
</dbReference>
<dbReference type="Gene3D" id="3.90.650.10">
    <property type="entry name" value="PurM-like C-terminal domain"/>
    <property type="match status" value="2"/>
</dbReference>
<dbReference type="Gene3D" id="3.30.1330.10">
    <property type="entry name" value="PurM-like, N-terminal domain"/>
    <property type="match status" value="2"/>
</dbReference>
<dbReference type="HAMAP" id="MF_00420">
    <property type="entry name" value="PurL_2"/>
    <property type="match status" value="1"/>
</dbReference>
<dbReference type="InterPro" id="IPR010074">
    <property type="entry name" value="PRibForGlyAmidine_synth_PurL"/>
</dbReference>
<dbReference type="InterPro" id="IPR041609">
    <property type="entry name" value="PurL_linker"/>
</dbReference>
<dbReference type="InterPro" id="IPR010918">
    <property type="entry name" value="PurM-like_C_dom"/>
</dbReference>
<dbReference type="InterPro" id="IPR036676">
    <property type="entry name" value="PurM-like_C_sf"/>
</dbReference>
<dbReference type="InterPro" id="IPR016188">
    <property type="entry name" value="PurM-like_N"/>
</dbReference>
<dbReference type="InterPro" id="IPR036921">
    <property type="entry name" value="PurM-like_N_sf"/>
</dbReference>
<dbReference type="NCBIfam" id="TIGR01736">
    <property type="entry name" value="FGAM_synth_II"/>
    <property type="match status" value="1"/>
</dbReference>
<dbReference type="NCBIfam" id="NF002290">
    <property type="entry name" value="PRK01213.1"/>
    <property type="match status" value="1"/>
</dbReference>
<dbReference type="PANTHER" id="PTHR43555">
    <property type="entry name" value="PHOSPHORIBOSYLFORMYLGLYCINAMIDINE SYNTHASE SUBUNIT PURL"/>
    <property type="match status" value="1"/>
</dbReference>
<dbReference type="PANTHER" id="PTHR43555:SF1">
    <property type="entry name" value="PHOSPHORIBOSYLFORMYLGLYCINAMIDINE SYNTHASE SUBUNIT PURL"/>
    <property type="match status" value="1"/>
</dbReference>
<dbReference type="Pfam" id="PF00586">
    <property type="entry name" value="AIRS"/>
    <property type="match status" value="2"/>
</dbReference>
<dbReference type="Pfam" id="PF02769">
    <property type="entry name" value="AIRS_C"/>
    <property type="match status" value="2"/>
</dbReference>
<dbReference type="Pfam" id="PF18072">
    <property type="entry name" value="FGAR-AT_linker"/>
    <property type="match status" value="1"/>
</dbReference>
<dbReference type="PIRSF" id="PIRSF001587">
    <property type="entry name" value="FGAM_synthase_II"/>
    <property type="match status" value="1"/>
</dbReference>
<dbReference type="SUPFAM" id="SSF56042">
    <property type="entry name" value="PurM C-terminal domain-like"/>
    <property type="match status" value="2"/>
</dbReference>
<dbReference type="SUPFAM" id="SSF55326">
    <property type="entry name" value="PurM N-terminal domain-like"/>
    <property type="match status" value="2"/>
</dbReference>
<reference key="1">
    <citation type="journal article" date="2006" name="Proc. Natl. Acad. Sci. U.S.A.">
        <title>The complete genome of Rhodococcus sp. RHA1 provides insights into a catabolic powerhouse.</title>
        <authorList>
            <person name="McLeod M.P."/>
            <person name="Warren R.L."/>
            <person name="Hsiao W.W.L."/>
            <person name="Araki N."/>
            <person name="Myhre M."/>
            <person name="Fernandes C."/>
            <person name="Miyazawa D."/>
            <person name="Wong W."/>
            <person name="Lillquist A.L."/>
            <person name="Wang D."/>
            <person name="Dosanjh M."/>
            <person name="Hara H."/>
            <person name="Petrescu A."/>
            <person name="Morin R.D."/>
            <person name="Yang G."/>
            <person name="Stott J.M."/>
            <person name="Schein J.E."/>
            <person name="Shin H."/>
            <person name="Smailus D."/>
            <person name="Siddiqui A.S."/>
            <person name="Marra M.A."/>
            <person name="Jones S.J.M."/>
            <person name="Holt R."/>
            <person name="Brinkman F.S.L."/>
            <person name="Miyauchi K."/>
            <person name="Fukuda M."/>
            <person name="Davies J.E."/>
            <person name="Mohn W.W."/>
            <person name="Eltis L.D."/>
        </authorList>
    </citation>
    <scope>NUCLEOTIDE SEQUENCE [LARGE SCALE GENOMIC DNA]</scope>
    <source>
        <strain>RHA1</strain>
    </source>
</reference>
<organism>
    <name type="scientific">Rhodococcus jostii (strain RHA1)</name>
    <dbReference type="NCBI Taxonomy" id="101510"/>
    <lineage>
        <taxon>Bacteria</taxon>
        <taxon>Bacillati</taxon>
        <taxon>Actinomycetota</taxon>
        <taxon>Actinomycetes</taxon>
        <taxon>Mycobacteriales</taxon>
        <taxon>Nocardiaceae</taxon>
        <taxon>Rhodococcus</taxon>
    </lineage>
</organism>
<proteinExistence type="inferred from homology"/>
<comment type="function">
    <text evidence="1">Part of the phosphoribosylformylglycinamidine synthase complex involved in the purines biosynthetic pathway. Catalyzes the ATP-dependent conversion of formylglycinamide ribonucleotide (FGAR) and glutamine to yield formylglycinamidine ribonucleotide (FGAM) and glutamate. The FGAM synthase complex is composed of three subunits. PurQ produces an ammonia molecule by converting glutamine to glutamate. PurL transfers the ammonia molecule to FGAR to form FGAM in an ATP-dependent manner. PurS interacts with PurQ and PurL and is thought to assist in the transfer of the ammonia molecule from PurQ to PurL.</text>
</comment>
<comment type="catalytic activity">
    <reaction evidence="1">
        <text>N(2)-formyl-N(1)-(5-phospho-beta-D-ribosyl)glycinamide + L-glutamine + ATP + H2O = 2-formamido-N(1)-(5-O-phospho-beta-D-ribosyl)acetamidine + L-glutamate + ADP + phosphate + H(+)</text>
        <dbReference type="Rhea" id="RHEA:17129"/>
        <dbReference type="ChEBI" id="CHEBI:15377"/>
        <dbReference type="ChEBI" id="CHEBI:15378"/>
        <dbReference type="ChEBI" id="CHEBI:29985"/>
        <dbReference type="ChEBI" id="CHEBI:30616"/>
        <dbReference type="ChEBI" id="CHEBI:43474"/>
        <dbReference type="ChEBI" id="CHEBI:58359"/>
        <dbReference type="ChEBI" id="CHEBI:147286"/>
        <dbReference type="ChEBI" id="CHEBI:147287"/>
        <dbReference type="ChEBI" id="CHEBI:456216"/>
        <dbReference type="EC" id="6.3.5.3"/>
    </reaction>
</comment>
<comment type="pathway">
    <text evidence="1">Purine metabolism; IMP biosynthesis via de novo pathway; 5-amino-1-(5-phospho-D-ribosyl)imidazole from N(2)-formyl-N(1)-(5-phospho-D-ribosyl)glycinamide: step 1/2.</text>
</comment>
<comment type="subunit">
    <text evidence="1">Monomer. Part of the FGAM synthase complex composed of 1 PurL, 1 PurQ and 2 PurS subunits.</text>
</comment>
<comment type="subcellular location">
    <subcellularLocation>
        <location evidence="1">Cytoplasm</location>
    </subcellularLocation>
</comment>
<comment type="similarity">
    <text evidence="1">Belongs to the FGAMS family.</text>
</comment>